<reference key="1">
    <citation type="journal article" date="2001" name="J. Bacteriol.">
        <title>Genome of the bacterium Streptococcus pneumoniae strain R6.</title>
        <authorList>
            <person name="Hoskins J."/>
            <person name="Alborn W.E. Jr."/>
            <person name="Arnold J."/>
            <person name="Blaszczak L.C."/>
            <person name="Burgett S."/>
            <person name="DeHoff B.S."/>
            <person name="Estrem S.T."/>
            <person name="Fritz L."/>
            <person name="Fu D.-J."/>
            <person name="Fuller W."/>
            <person name="Geringer C."/>
            <person name="Gilmour R."/>
            <person name="Glass J.S."/>
            <person name="Khoja H."/>
            <person name="Kraft A.R."/>
            <person name="Lagace R.E."/>
            <person name="LeBlanc D.J."/>
            <person name="Lee L.N."/>
            <person name="Lefkowitz E.J."/>
            <person name="Lu J."/>
            <person name="Matsushima P."/>
            <person name="McAhren S.M."/>
            <person name="McHenney M."/>
            <person name="McLeaster K."/>
            <person name="Mundy C.W."/>
            <person name="Nicas T.I."/>
            <person name="Norris F.H."/>
            <person name="O'Gara M."/>
            <person name="Peery R.B."/>
            <person name="Robertson G.T."/>
            <person name="Rockey P."/>
            <person name="Sun P.-M."/>
            <person name="Winkler M.E."/>
            <person name="Yang Y."/>
            <person name="Young-Bellido M."/>
            <person name="Zhao G."/>
            <person name="Zook C.A."/>
            <person name="Baltz R.H."/>
            <person name="Jaskunas S.R."/>
            <person name="Rosteck P.R. Jr."/>
            <person name="Skatrud P.L."/>
            <person name="Glass J.I."/>
        </authorList>
    </citation>
    <scope>NUCLEOTIDE SEQUENCE [LARGE SCALE GENOMIC DNA]</scope>
    <source>
        <strain>ATCC BAA-255 / R6</strain>
    </source>
</reference>
<keyword id="KW-0067">ATP-binding</keyword>
<keyword id="KW-0418">Kinase</keyword>
<keyword id="KW-0545">Nucleotide biosynthesis</keyword>
<keyword id="KW-0547">Nucleotide-binding</keyword>
<keyword id="KW-1185">Reference proteome</keyword>
<keyword id="KW-0808">Transferase</keyword>
<organism>
    <name type="scientific">Streptococcus pneumoniae (strain ATCC BAA-255 / R6)</name>
    <dbReference type="NCBI Taxonomy" id="171101"/>
    <lineage>
        <taxon>Bacteria</taxon>
        <taxon>Bacillati</taxon>
        <taxon>Bacillota</taxon>
        <taxon>Bacilli</taxon>
        <taxon>Lactobacillales</taxon>
        <taxon>Streptococcaceae</taxon>
        <taxon>Streptococcus</taxon>
    </lineage>
</organism>
<name>KTHY_STRR6</name>
<gene>
    <name evidence="1" type="primary">tmk</name>
    <name type="ordered locus">spr0835</name>
</gene>
<dbReference type="EC" id="2.7.4.9" evidence="1"/>
<dbReference type="EMBL" id="AE007317">
    <property type="protein sequence ID" value="AAK99639.1"/>
    <property type="molecule type" value="Genomic_DNA"/>
</dbReference>
<dbReference type="PIR" id="C97976">
    <property type="entry name" value="C97976"/>
</dbReference>
<dbReference type="RefSeq" id="NP_358429.1">
    <property type="nucleotide sequence ID" value="NC_003098.1"/>
</dbReference>
<dbReference type="RefSeq" id="WP_000033364.1">
    <property type="nucleotide sequence ID" value="NC_003098.1"/>
</dbReference>
<dbReference type="SMR" id="Q8DQ58"/>
<dbReference type="STRING" id="171101.spr0835"/>
<dbReference type="KEGG" id="spr:spr0835"/>
<dbReference type="PATRIC" id="fig|171101.6.peg.924"/>
<dbReference type="eggNOG" id="COG0125">
    <property type="taxonomic scope" value="Bacteria"/>
</dbReference>
<dbReference type="HOGENOM" id="CLU_049131_0_2_9"/>
<dbReference type="Proteomes" id="UP000000586">
    <property type="component" value="Chromosome"/>
</dbReference>
<dbReference type="GO" id="GO:0005737">
    <property type="term" value="C:cytoplasm"/>
    <property type="evidence" value="ECO:0000318"/>
    <property type="project" value="GO_Central"/>
</dbReference>
<dbReference type="GO" id="GO:0005829">
    <property type="term" value="C:cytosol"/>
    <property type="evidence" value="ECO:0000318"/>
    <property type="project" value="GO_Central"/>
</dbReference>
<dbReference type="GO" id="GO:0005524">
    <property type="term" value="F:ATP binding"/>
    <property type="evidence" value="ECO:0007669"/>
    <property type="project" value="UniProtKB-UniRule"/>
</dbReference>
<dbReference type="GO" id="GO:0004798">
    <property type="term" value="F:dTMP kinase activity"/>
    <property type="evidence" value="ECO:0000318"/>
    <property type="project" value="GO_Central"/>
</dbReference>
<dbReference type="GO" id="GO:0006233">
    <property type="term" value="P:dTDP biosynthetic process"/>
    <property type="evidence" value="ECO:0000318"/>
    <property type="project" value="GO_Central"/>
</dbReference>
<dbReference type="GO" id="GO:0006235">
    <property type="term" value="P:dTTP biosynthetic process"/>
    <property type="evidence" value="ECO:0000318"/>
    <property type="project" value="GO_Central"/>
</dbReference>
<dbReference type="GO" id="GO:0006227">
    <property type="term" value="P:dUDP biosynthetic process"/>
    <property type="evidence" value="ECO:0000318"/>
    <property type="project" value="GO_Central"/>
</dbReference>
<dbReference type="CDD" id="cd01672">
    <property type="entry name" value="TMPK"/>
    <property type="match status" value="1"/>
</dbReference>
<dbReference type="FunFam" id="3.40.50.300:FF:000225">
    <property type="entry name" value="Thymidylate kinase"/>
    <property type="match status" value="1"/>
</dbReference>
<dbReference type="Gene3D" id="3.40.50.300">
    <property type="entry name" value="P-loop containing nucleotide triphosphate hydrolases"/>
    <property type="match status" value="1"/>
</dbReference>
<dbReference type="HAMAP" id="MF_00165">
    <property type="entry name" value="Thymidylate_kinase"/>
    <property type="match status" value="1"/>
</dbReference>
<dbReference type="InterPro" id="IPR027417">
    <property type="entry name" value="P-loop_NTPase"/>
</dbReference>
<dbReference type="InterPro" id="IPR039430">
    <property type="entry name" value="Thymidylate_kin-like_dom"/>
</dbReference>
<dbReference type="InterPro" id="IPR018095">
    <property type="entry name" value="Thymidylate_kin_CS"/>
</dbReference>
<dbReference type="InterPro" id="IPR018094">
    <property type="entry name" value="Thymidylate_kinase"/>
</dbReference>
<dbReference type="NCBIfam" id="TIGR00041">
    <property type="entry name" value="DTMP_kinase"/>
    <property type="match status" value="1"/>
</dbReference>
<dbReference type="PANTHER" id="PTHR10344">
    <property type="entry name" value="THYMIDYLATE KINASE"/>
    <property type="match status" value="1"/>
</dbReference>
<dbReference type="PANTHER" id="PTHR10344:SF4">
    <property type="entry name" value="UMP-CMP KINASE 2, MITOCHONDRIAL"/>
    <property type="match status" value="1"/>
</dbReference>
<dbReference type="Pfam" id="PF02223">
    <property type="entry name" value="Thymidylate_kin"/>
    <property type="match status" value="1"/>
</dbReference>
<dbReference type="SUPFAM" id="SSF52540">
    <property type="entry name" value="P-loop containing nucleoside triphosphate hydrolases"/>
    <property type="match status" value="1"/>
</dbReference>
<dbReference type="PROSITE" id="PS01331">
    <property type="entry name" value="THYMIDYLATE_KINASE"/>
    <property type="match status" value="1"/>
</dbReference>
<comment type="function">
    <text evidence="1">Phosphorylation of dTMP to form dTDP in both de novo and salvage pathways of dTTP synthesis.</text>
</comment>
<comment type="catalytic activity">
    <reaction evidence="1">
        <text>dTMP + ATP = dTDP + ADP</text>
        <dbReference type="Rhea" id="RHEA:13517"/>
        <dbReference type="ChEBI" id="CHEBI:30616"/>
        <dbReference type="ChEBI" id="CHEBI:58369"/>
        <dbReference type="ChEBI" id="CHEBI:63528"/>
        <dbReference type="ChEBI" id="CHEBI:456216"/>
        <dbReference type="EC" id="2.7.4.9"/>
    </reaction>
</comment>
<comment type="similarity">
    <text evidence="1">Belongs to the thymidylate kinase family.</text>
</comment>
<protein>
    <recommendedName>
        <fullName evidence="1">Thymidylate kinase</fullName>
        <ecNumber evidence="1">2.7.4.9</ecNumber>
    </recommendedName>
    <alternativeName>
        <fullName evidence="1">dTMP kinase</fullName>
    </alternativeName>
</protein>
<sequence>MSKGFLVSLEGPEGAGKTSVLEALLPILEEKGVEVLTTREPGGVLIGEKIREVILDPSHTQMDAKTELLLYIASRRQHLVEKVLPALEAGKLVIMDRFIDSSVAYQGFGRGLDIEAIDWLNQFATDGLKPDLTLYFDIEVEEGLARIAANSDREVNRLDLEGLDLHKKVRQGYLSLLDKEGNRIVKIDASLPLEQVVETTNAVLFDGMGLAK</sequence>
<feature type="chain" id="PRO_0000155350" description="Thymidylate kinase">
    <location>
        <begin position="1"/>
        <end position="212"/>
    </location>
</feature>
<feature type="binding site" evidence="1">
    <location>
        <begin position="11"/>
        <end position="18"/>
    </location>
    <ligand>
        <name>ATP</name>
        <dbReference type="ChEBI" id="CHEBI:30616"/>
    </ligand>
</feature>
<accession>Q8DQ58</accession>
<proteinExistence type="inferred from homology"/>
<evidence type="ECO:0000255" key="1">
    <source>
        <dbReference type="HAMAP-Rule" id="MF_00165"/>
    </source>
</evidence>